<evidence type="ECO:0000255" key="1">
    <source>
        <dbReference type="HAMAP-Rule" id="MF_00580"/>
    </source>
</evidence>
<comment type="function">
    <text evidence="1">Together with the chaperonin GroEL, plays an essential role in assisting protein folding. The GroEL-GroES system forms a nano-cage that allows encapsulation of the non-native substrate proteins and provides a physical environment optimized to promote and accelerate protein folding. GroES binds to the apical surface of the GroEL ring, thereby capping the opening of the GroEL channel.</text>
</comment>
<comment type="subunit">
    <text evidence="1">Heptamer of 7 subunits arranged in a ring. Interacts with the chaperonin GroEL.</text>
</comment>
<comment type="subcellular location">
    <subcellularLocation>
        <location evidence="1">Cytoplasm</location>
    </subcellularLocation>
</comment>
<comment type="similarity">
    <text evidence="1">Belongs to the GroES chaperonin family.</text>
</comment>
<feature type="chain" id="PRO_1000129650" description="Co-chaperonin GroES">
    <location>
        <begin position="1"/>
        <end position="95"/>
    </location>
</feature>
<gene>
    <name evidence="1" type="primary">groES</name>
    <name evidence="1" type="synonym">groS</name>
    <name type="ordered locus">DvMF_3063</name>
</gene>
<dbReference type="EMBL" id="CP001197">
    <property type="protein sequence ID" value="ACL10000.1"/>
    <property type="molecule type" value="Genomic_DNA"/>
</dbReference>
<dbReference type="SMR" id="B8DJC3"/>
<dbReference type="STRING" id="883.DvMF_3063"/>
<dbReference type="KEGG" id="dvm:DvMF_3063"/>
<dbReference type="eggNOG" id="COG0234">
    <property type="taxonomic scope" value="Bacteria"/>
</dbReference>
<dbReference type="HOGENOM" id="CLU_132825_2_0_7"/>
<dbReference type="OrthoDB" id="9806791at2"/>
<dbReference type="GO" id="GO:0005737">
    <property type="term" value="C:cytoplasm"/>
    <property type="evidence" value="ECO:0007669"/>
    <property type="project" value="UniProtKB-SubCell"/>
</dbReference>
<dbReference type="GO" id="GO:0005524">
    <property type="term" value="F:ATP binding"/>
    <property type="evidence" value="ECO:0007669"/>
    <property type="project" value="InterPro"/>
</dbReference>
<dbReference type="GO" id="GO:0046872">
    <property type="term" value="F:metal ion binding"/>
    <property type="evidence" value="ECO:0007669"/>
    <property type="project" value="TreeGrafter"/>
</dbReference>
<dbReference type="GO" id="GO:0044183">
    <property type="term" value="F:protein folding chaperone"/>
    <property type="evidence" value="ECO:0007669"/>
    <property type="project" value="InterPro"/>
</dbReference>
<dbReference type="GO" id="GO:0051087">
    <property type="term" value="F:protein-folding chaperone binding"/>
    <property type="evidence" value="ECO:0007669"/>
    <property type="project" value="TreeGrafter"/>
</dbReference>
<dbReference type="GO" id="GO:0051082">
    <property type="term" value="F:unfolded protein binding"/>
    <property type="evidence" value="ECO:0007669"/>
    <property type="project" value="TreeGrafter"/>
</dbReference>
<dbReference type="GO" id="GO:0051085">
    <property type="term" value="P:chaperone cofactor-dependent protein refolding"/>
    <property type="evidence" value="ECO:0007669"/>
    <property type="project" value="TreeGrafter"/>
</dbReference>
<dbReference type="CDD" id="cd00320">
    <property type="entry name" value="cpn10"/>
    <property type="match status" value="1"/>
</dbReference>
<dbReference type="FunFam" id="2.30.33.40:FF:000001">
    <property type="entry name" value="10 kDa chaperonin"/>
    <property type="match status" value="1"/>
</dbReference>
<dbReference type="Gene3D" id="2.30.33.40">
    <property type="entry name" value="GroES chaperonin"/>
    <property type="match status" value="1"/>
</dbReference>
<dbReference type="HAMAP" id="MF_00580">
    <property type="entry name" value="CH10"/>
    <property type="match status" value="1"/>
</dbReference>
<dbReference type="InterPro" id="IPR020818">
    <property type="entry name" value="Chaperonin_GroES"/>
</dbReference>
<dbReference type="InterPro" id="IPR037124">
    <property type="entry name" value="Chaperonin_GroES_sf"/>
</dbReference>
<dbReference type="InterPro" id="IPR018369">
    <property type="entry name" value="Chaprnonin_Cpn10_CS"/>
</dbReference>
<dbReference type="InterPro" id="IPR011032">
    <property type="entry name" value="GroES-like_sf"/>
</dbReference>
<dbReference type="NCBIfam" id="NF001527">
    <property type="entry name" value="PRK00364.1-2"/>
    <property type="match status" value="1"/>
</dbReference>
<dbReference type="NCBIfam" id="NF001529">
    <property type="entry name" value="PRK00364.1-5"/>
    <property type="match status" value="1"/>
</dbReference>
<dbReference type="NCBIfam" id="NF001531">
    <property type="entry name" value="PRK00364.2-2"/>
    <property type="match status" value="1"/>
</dbReference>
<dbReference type="NCBIfam" id="NF001533">
    <property type="entry name" value="PRK00364.2-4"/>
    <property type="match status" value="1"/>
</dbReference>
<dbReference type="NCBIfam" id="NF001534">
    <property type="entry name" value="PRK00364.2-5"/>
    <property type="match status" value="1"/>
</dbReference>
<dbReference type="PANTHER" id="PTHR10772">
    <property type="entry name" value="10 KDA HEAT SHOCK PROTEIN"/>
    <property type="match status" value="1"/>
</dbReference>
<dbReference type="PANTHER" id="PTHR10772:SF63">
    <property type="entry name" value="20 KDA CHAPERONIN, CHLOROPLASTIC"/>
    <property type="match status" value="1"/>
</dbReference>
<dbReference type="Pfam" id="PF00166">
    <property type="entry name" value="Cpn10"/>
    <property type="match status" value="1"/>
</dbReference>
<dbReference type="PRINTS" id="PR00297">
    <property type="entry name" value="CHAPERONIN10"/>
</dbReference>
<dbReference type="SMART" id="SM00883">
    <property type="entry name" value="Cpn10"/>
    <property type="match status" value="1"/>
</dbReference>
<dbReference type="SUPFAM" id="SSF50129">
    <property type="entry name" value="GroES-like"/>
    <property type="match status" value="1"/>
</dbReference>
<dbReference type="PROSITE" id="PS00681">
    <property type="entry name" value="CHAPERONINS_CPN10"/>
    <property type="match status" value="1"/>
</dbReference>
<name>CH10_NITV9</name>
<keyword id="KW-0143">Chaperone</keyword>
<keyword id="KW-0963">Cytoplasm</keyword>
<accession>B8DJC3</accession>
<organism>
    <name type="scientific">Nitratidesulfovibrio vulgaris (strain DSM 19637 / Miyazaki F)</name>
    <name type="common">Desulfovibrio vulgaris</name>
    <dbReference type="NCBI Taxonomy" id="883"/>
    <lineage>
        <taxon>Bacteria</taxon>
        <taxon>Pseudomonadati</taxon>
        <taxon>Thermodesulfobacteriota</taxon>
        <taxon>Desulfovibrionia</taxon>
        <taxon>Desulfovibrionales</taxon>
        <taxon>Desulfovibrionaceae</taxon>
        <taxon>Nitratidesulfovibrio</taxon>
    </lineage>
</organism>
<proteinExistence type="inferred from homology"/>
<sequence length="95" mass="10306">MNLKPLNDRVLVKRLESEEKTAGGLFIPDTAKEKPSRGEVVAAGPGKVAEDGKLIAMTVKKGDTVLFSKYAGTEIKLDGVEHLVMREDDILAIIE</sequence>
<protein>
    <recommendedName>
        <fullName evidence="1">Co-chaperonin GroES</fullName>
    </recommendedName>
    <alternativeName>
        <fullName evidence="1">10 kDa chaperonin</fullName>
    </alternativeName>
    <alternativeName>
        <fullName evidence="1">Chaperonin-10</fullName>
        <shortName evidence="1">Cpn10</shortName>
    </alternativeName>
</protein>
<reference key="1">
    <citation type="submission" date="2008-10" db="EMBL/GenBank/DDBJ databases">
        <title>Complete sequence of Desulfovibrio vulgaris str. 'Miyazaki F'.</title>
        <authorList>
            <person name="Lucas S."/>
            <person name="Copeland A."/>
            <person name="Lapidus A."/>
            <person name="Glavina del Rio T."/>
            <person name="Dalin E."/>
            <person name="Tice H."/>
            <person name="Bruce D."/>
            <person name="Goodwin L."/>
            <person name="Pitluck S."/>
            <person name="Sims D."/>
            <person name="Brettin T."/>
            <person name="Detter J.C."/>
            <person name="Han C."/>
            <person name="Larimer F."/>
            <person name="Land M."/>
            <person name="Hauser L."/>
            <person name="Kyrpides N."/>
            <person name="Mikhailova N."/>
            <person name="Hazen T.C."/>
            <person name="Richardson P."/>
        </authorList>
    </citation>
    <scope>NUCLEOTIDE SEQUENCE [LARGE SCALE GENOMIC DNA]</scope>
    <source>
        <strain>DSM 19637 / Miyazaki F</strain>
    </source>
</reference>